<accession>O33507</accession>
<feature type="chain" id="PRO_0000182815" description="Outer membrane porin C">
    <location>
        <begin position="1" status="less than"/>
        <end position="342" status="greater than"/>
    </location>
</feature>
<feature type="non-terminal residue">
    <location>
        <position position="1"/>
    </location>
</feature>
<feature type="non-terminal residue">
    <location>
        <position position="342"/>
    </location>
</feature>
<comment type="function">
    <text>Forms pores that allow passive diffusion of small molecules across the outer membrane. In R.aquatilis OmpC is involved in the adhesion to wheat roots.</text>
</comment>
<comment type="subunit">
    <text evidence="1">Homotrimer.</text>
</comment>
<comment type="subcellular location">
    <subcellularLocation>
        <location>Cell outer membrane</location>
        <topology>Multi-pass membrane protein</topology>
    </subcellularLocation>
</comment>
<comment type="similarity">
    <text evidence="2">Belongs to the Gram-negative porin family.</text>
</comment>
<dbReference type="EMBL" id="AJ002879">
    <property type="protein sequence ID" value="CAA05726.1"/>
    <property type="molecule type" value="Genomic_DNA"/>
</dbReference>
<dbReference type="GO" id="GO:0009279">
    <property type="term" value="C:cell outer membrane"/>
    <property type="evidence" value="ECO:0007669"/>
    <property type="project" value="UniProtKB-SubCell"/>
</dbReference>
<dbReference type="GO" id="GO:0046930">
    <property type="term" value="C:pore complex"/>
    <property type="evidence" value="ECO:0007669"/>
    <property type="project" value="UniProtKB-KW"/>
</dbReference>
<dbReference type="GO" id="GO:0015288">
    <property type="term" value="F:porin activity"/>
    <property type="evidence" value="ECO:0007669"/>
    <property type="project" value="UniProtKB-KW"/>
</dbReference>
<dbReference type="GO" id="GO:0034220">
    <property type="term" value="P:monoatomic ion transmembrane transport"/>
    <property type="evidence" value="ECO:0007669"/>
    <property type="project" value="InterPro"/>
</dbReference>
<dbReference type="CDD" id="cd00342">
    <property type="entry name" value="gram_neg_porins"/>
    <property type="match status" value="1"/>
</dbReference>
<dbReference type="Gene3D" id="2.40.160.10">
    <property type="entry name" value="Porin"/>
    <property type="match status" value="1"/>
</dbReference>
<dbReference type="InterPro" id="IPR050298">
    <property type="entry name" value="Gram-neg_bact_OMP"/>
</dbReference>
<dbReference type="InterPro" id="IPR033900">
    <property type="entry name" value="Gram_neg_porin_domain"/>
</dbReference>
<dbReference type="InterPro" id="IPR023614">
    <property type="entry name" value="Porin_dom_sf"/>
</dbReference>
<dbReference type="InterPro" id="IPR001897">
    <property type="entry name" value="Porin_gammaproteobac"/>
</dbReference>
<dbReference type="InterPro" id="IPR001702">
    <property type="entry name" value="Porin_Gram-ve"/>
</dbReference>
<dbReference type="NCBIfam" id="NF007841">
    <property type="entry name" value="PRK10554.1"/>
    <property type="match status" value="1"/>
</dbReference>
<dbReference type="PANTHER" id="PTHR34501:SF1">
    <property type="entry name" value="OUTER MEMBRANE PORIN C"/>
    <property type="match status" value="1"/>
</dbReference>
<dbReference type="PANTHER" id="PTHR34501">
    <property type="entry name" value="PROTEIN YDDL-RELATED"/>
    <property type="match status" value="1"/>
</dbReference>
<dbReference type="Pfam" id="PF00267">
    <property type="entry name" value="Porin_1"/>
    <property type="match status" value="1"/>
</dbReference>
<dbReference type="PRINTS" id="PR00183">
    <property type="entry name" value="ECOLIPORIN"/>
</dbReference>
<dbReference type="PRINTS" id="PR00182">
    <property type="entry name" value="ECOLNEIPORIN"/>
</dbReference>
<dbReference type="SUPFAM" id="SSF56935">
    <property type="entry name" value="Porins"/>
    <property type="match status" value="1"/>
</dbReference>
<proteinExistence type="inferred from homology"/>
<name>OMPC_RAHAQ</name>
<organism>
    <name type="scientific">Rahnella aquatilis</name>
    <dbReference type="NCBI Taxonomy" id="34038"/>
    <lineage>
        <taxon>Bacteria</taxon>
        <taxon>Pseudomonadati</taxon>
        <taxon>Pseudomonadota</taxon>
        <taxon>Gammaproteobacteria</taxon>
        <taxon>Enterobacterales</taxon>
        <taxon>Yersiniaceae</taxon>
        <taxon>Rahnella</taxon>
    </lineage>
</organism>
<keyword id="KW-0998">Cell outer membrane</keyword>
<keyword id="KW-0406">Ion transport</keyword>
<keyword id="KW-0472">Membrane</keyword>
<keyword id="KW-0626">Porin</keyword>
<keyword id="KW-0812">Transmembrane</keyword>
<keyword id="KW-1134">Transmembrane beta strand</keyword>
<keyword id="KW-0813">Transport</keyword>
<reference key="1">
    <citation type="journal article" date="1998" name="J. Bacteriol.">
        <title>A major outer membrane protein of Rahnella aquatilis functions as a porin and root adhesin.</title>
        <authorList>
            <person name="Achouak W."/>
            <person name="Pages J.-M."/>
            <person name="de Mot R."/>
            <person name="Molle G."/>
            <person name="Heulin T."/>
        </authorList>
    </citation>
    <scope>NUCLEOTIDE SEQUENCE [GENOMIC DNA]</scope>
    <source>
        <strain>CF3</strain>
    </source>
</reference>
<evidence type="ECO:0000250" key="1"/>
<evidence type="ECO:0000305" key="2"/>
<sequence>EIYNKDGNKLDLSGKVDGLHYFSNDDSADGDQSYMRLGFRGETQINNELTGYGEWEYQASLNTAESEDANNFTRVGFAGLKFGQWGSLDYGRNYGVMYDLAAWTDVLPEFGGDTYGADNFMFQRANGVLTYRNKDFFGLVDGLDVAVQYQGKNGSATESTMGRDVLRQNGDGYGMSLTYDLGEGFSAAGAMMASTRTSEQNGRQNPAIIGNGDRAETYTGGLKYXANNIYLAAVFTQTYNARIGVSSDSSHLGYADNAQNFEAVAQYQFDFGLRPSIAYVQSHARNVPGYSNQNLTKYVDVGASYFFNKNMLTYVDYKINLMDDTRLTRDAGINTDDIVAVG</sequence>
<gene>
    <name type="primary">ompC</name>
</gene>
<protein>
    <recommendedName>
        <fullName>Outer membrane porin C</fullName>
    </recommendedName>
    <alternativeName>
        <fullName>Outer membrane protein C</fullName>
    </alternativeName>
    <alternativeName>
        <fullName>Porin OmpC</fullName>
    </alternativeName>
</protein>